<organism>
    <name type="scientific">Picrophilus torridus (strain ATCC 700027 / DSM 9790 / JCM 10055 / NBRC 100828 / KAW 2/3)</name>
    <dbReference type="NCBI Taxonomy" id="1122961"/>
    <lineage>
        <taxon>Archaea</taxon>
        <taxon>Methanobacteriati</taxon>
        <taxon>Thermoplasmatota</taxon>
        <taxon>Thermoplasmata</taxon>
        <taxon>Thermoplasmatales</taxon>
        <taxon>Picrophilaceae</taxon>
        <taxon>Picrophilus</taxon>
    </lineage>
</organism>
<reference key="1">
    <citation type="journal article" date="2004" name="Proc. Natl. Acad. Sci. U.S.A.">
        <title>Genome sequence of Picrophilus torridus and its implications for life around pH 0.</title>
        <authorList>
            <person name="Fuetterer O."/>
            <person name="Angelov A."/>
            <person name="Liesegang H."/>
            <person name="Gottschalk G."/>
            <person name="Schleper C."/>
            <person name="Schepers B."/>
            <person name="Dock C."/>
            <person name="Antranikian G."/>
            <person name="Liebl W."/>
        </authorList>
    </citation>
    <scope>NUCLEOTIDE SEQUENCE [LARGE SCALE GENOMIC DNA]</scope>
    <source>
        <strain>ATCC 700027 / DSM 9790 / JCM 10055 / NBRC 100828 / KAW 2/3</strain>
    </source>
</reference>
<comment type="function">
    <text evidence="1">Binds directly to 23S rRNA. Probably involved in E site tRNA release.</text>
</comment>
<comment type="function">
    <text evidence="1">Protein L1 is also a translational repressor protein, it controls the translation of its operon by binding to its mRNA.</text>
</comment>
<comment type="subunit">
    <text evidence="1">Part of the 50S ribosomal subunit.</text>
</comment>
<comment type="similarity">
    <text evidence="1">Belongs to the universal ribosomal protein uL1 family.</text>
</comment>
<protein>
    <recommendedName>
        <fullName evidence="1">Large ribosomal subunit protein uL1</fullName>
    </recommendedName>
    <alternativeName>
        <fullName evidence="2">50S ribosomal protein L1</fullName>
    </alternativeName>
</protein>
<feature type="chain" id="PRO_0000125806" description="Large ribosomal subunit protein uL1">
    <location>
        <begin position="1"/>
        <end position="213"/>
    </location>
</feature>
<name>RL1_PICTO</name>
<dbReference type="EMBL" id="AE017261">
    <property type="protein sequence ID" value="AAT43023.1"/>
    <property type="molecule type" value="Genomic_DNA"/>
</dbReference>
<dbReference type="RefSeq" id="WP_011177239.1">
    <property type="nucleotide sequence ID" value="NC_005877.1"/>
</dbReference>
<dbReference type="SMR" id="Q6L1X9"/>
<dbReference type="FunCoup" id="Q6L1X9">
    <property type="interactions" value="142"/>
</dbReference>
<dbReference type="STRING" id="263820.PTO0438"/>
<dbReference type="PaxDb" id="263820-PTO0438"/>
<dbReference type="GeneID" id="2844951"/>
<dbReference type="KEGG" id="pto:PTO0438"/>
<dbReference type="PATRIC" id="fig|263820.9.peg.463"/>
<dbReference type="eggNOG" id="arCOG04289">
    <property type="taxonomic scope" value="Archaea"/>
</dbReference>
<dbReference type="HOGENOM" id="CLU_062853_4_0_2"/>
<dbReference type="InParanoid" id="Q6L1X9"/>
<dbReference type="OrthoDB" id="10382at2157"/>
<dbReference type="Proteomes" id="UP000000438">
    <property type="component" value="Chromosome"/>
</dbReference>
<dbReference type="GO" id="GO:0015934">
    <property type="term" value="C:large ribosomal subunit"/>
    <property type="evidence" value="ECO:0007669"/>
    <property type="project" value="InterPro"/>
</dbReference>
<dbReference type="GO" id="GO:0019843">
    <property type="term" value="F:rRNA binding"/>
    <property type="evidence" value="ECO:0007669"/>
    <property type="project" value="UniProtKB-UniRule"/>
</dbReference>
<dbReference type="GO" id="GO:0003735">
    <property type="term" value="F:structural constituent of ribosome"/>
    <property type="evidence" value="ECO:0007669"/>
    <property type="project" value="InterPro"/>
</dbReference>
<dbReference type="GO" id="GO:0000049">
    <property type="term" value="F:tRNA binding"/>
    <property type="evidence" value="ECO:0007669"/>
    <property type="project" value="UniProtKB-KW"/>
</dbReference>
<dbReference type="GO" id="GO:0006417">
    <property type="term" value="P:regulation of translation"/>
    <property type="evidence" value="ECO:0007669"/>
    <property type="project" value="UniProtKB-KW"/>
</dbReference>
<dbReference type="GO" id="GO:0006412">
    <property type="term" value="P:translation"/>
    <property type="evidence" value="ECO:0007669"/>
    <property type="project" value="UniProtKB-UniRule"/>
</dbReference>
<dbReference type="CDD" id="cd00403">
    <property type="entry name" value="Ribosomal_L1"/>
    <property type="match status" value="1"/>
</dbReference>
<dbReference type="FunFam" id="3.40.50.790:FF:000005">
    <property type="entry name" value="50S ribosomal protein L1"/>
    <property type="match status" value="1"/>
</dbReference>
<dbReference type="Gene3D" id="3.30.190.20">
    <property type="match status" value="1"/>
</dbReference>
<dbReference type="Gene3D" id="3.40.50.790">
    <property type="match status" value="1"/>
</dbReference>
<dbReference type="HAMAP" id="MF_01318_A">
    <property type="entry name" value="Ribosomal_uL1_A"/>
    <property type="match status" value="1"/>
</dbReference>
<dbReference type="InterPro" id="IPR002143">
    <property type="entry name" value="Ribosomal_uL1"/>
</dbReference>
<dbReference type="InterPro" id="IPR023674">
    <property type="entry name" value="Ribosomal_uL1-like"/>
</dbReference>
<dbReference type="InterPro" id="IPR028364">
    <property type="entry name" value="Ribosomal_uL1/biogenesis"/>
</dbReference>
<dbReference type="InterPro" id="IPR016095">
    <property type="entry name" value="Ribosomal_uL1_3-a/b-sand"/>
</dbReference>
<dbReference type="InterPro" id="IPR023669">
    <property type="entry name" value="Ribosomal_uL1_arc"/>
</dbReference>
<dbReference type="InterPro" id="IPR023673">
    <property type="entry name" value="Ribosomal_uL1_CS"/>
</dbReference>
<dbReference type="NCBIfam" id="NF003244">
    <property type="entry name" value="PRK04203.1"/>
    <property type="match status" value="1"/>
</dbReference>
<dbReference type="PANTHER" id="PTHR36427">
    <property type="entry name" value="54S RIBOSOMAL PROTEIN L1, MITOCHONDRIAL"/>
    <property type="match status" value="1"/>
</dbReference>
<dbReference type="PANTHER" id="PTHR36427:SF3">
    <property type="entry name" value="LARGE RIBOSOMAL SUBUNIT PROTEIN UL1M"/>
    <property type="match status" value="1"/>
</dbReference>
<dbReference type="Pfam" id="PF00687">
    <property type="entry name" value="Ribosomal_L1"/>
    <property type="match status" value="1"/>
</dbReference>
<dbReference type="PIRSF" id="PIRSF002155">
    <property type="entry name" value="Ribosomal_L1"/>
    <property type="match status" value="1"/>
</dbReference>
<dbReference type="SUPFAM" id="SSF56808">
    <property type="entry name" value="Ribosomal protein L1"/>
    <property type="match status" value="1"/>
</dbReference>
<dbReference type="PROSITE" id="PS01199">
    <property type="entry name" value="RIBOSOMAL_L1"/>
    <property type="match status" value="1"/>
</dbReference>
<keyword id="KW-0678">Repressor</keyword>
<keyword id="KW-0687">Ribonucleoprotein</keyword>
<keyword id="KW-0689">Ribosomal protein</keyword>
<keyword id="KW-0694">RNA-binding</keyword>
<keyword id="KW-0699">rRNA-binding</keyword>
<keyword id="KW-0810">Translation regulation</keyword>
<keyword id="KW-0820">tRNA-binding</keyword>
<accession>Q6L1X9</accession>
<evidence type="ECO:0000255" key="1">
    <source>
        <dbReference type="HAMAP-Rule" id="MF_01318"/>
    </source>
</evidence>
<evidence type="ECO:0000305" key="2"/>
<proteinExistence type="inferred from homology"/>
<gene>
    <name evidence="1" type="primary">rpl1</name>
    <name type="synonym">rplA</name>
    <name type="ordered locus">PTO0438</name>
</gene>
<sequence length="213" mass="23955">MVRNEIKAVKEESKKRNFLESIEISINLKDVDLSDPKKRINEEIVLPSGRGKDLKVALISSEEMKLKAKNADYTFSPEDVSKFVDDKKSFKKLANKVDFFVAESTLMSSIGKNLGVILGPRGKIPRPVPPGQDPTALIENLKKSVRARSRDRRTFHVPIGTREMSDDDLYNNFVTVYKRIVSRLDKGPGNIDSIYIKTTMGKAIKVETGDLND</sequence>